<gene>
    <name type="ordered locus">Pret-104</name>
</gene>
<organism>
    <name type="scientific">African swine fever virus (isolate Tick/South Africa/Pretoriuskop Pr4/1996)</name>
    <name type="common">ASFV</name>
    <dbReference type="NCBI Taxonomy" id="561443"/>
    <lineage>
        <taxon>Viruses</taxon>
        <taxon>Varidnaviria</taxon>
        <taxon>Bamfordvirae</taxon>
        <taxon>Nucleocytoviricota</taxon>
        <taxon>Pokkesviricetes</taxon>
        <taxon>Asfuvirales</taxon>
        <taxon>Asfarviridae</taxon>
        <taxon>Asfivirus</taxon>
        <taxon>African swine fever virus</taxon>
    </lineage>
</organism>
<protein>
    <recommendedName>
        <fullName evidence="2">Polyprotein pp220</fullName>
    </recommendedName>
    <alternativeName>
        <fullName>220 kDa polyprotein</fullName>
    </alternativeName>
    <component>
        <recommendedName>
            <fullName evidence="2">p34</fullName>
        </recommendedName>
    </component>
    <component>
        <recommendedName>
            <fullName evidence="2">p14</fullName>
        </recommendedName>
    </component>
    <component>
        <recommendedName>
            <fullName evidence="2">p37</fullName>
        </recommendedName>
    </component>
    <component>
        <recommendedName>
            <fullName evidence="2">p150</fullName>
        </recommendedName>
    </component>
    <component>
        <recommendedName>
            <fullName evidence="2">p5</fullName>
        </recommendedName>
    </component>
</protein>
<dbReference type="EMBL" id="AY261363">
    <property type="status" value="NOT_ANNOTATED_CDS"/>
    <property type="molecule type" value="Genomic_DNA"/>
</dbReference>
<dbReference type="SMR" id="P0CA03"/>
<dbReference type="Proteomes" id="UP000000859">
    <property type="component" value="Segment"/>
</dbReference>
<dbReference type="GO" id="GO:0042025">
    <property type="term" value="C:host cell nucleus"/>
    <property type="evidence" value="ECO:0007669"/>
    <property type="project" value="UniProtKB-SubCell"/>
</dbReference>
<dbReference type="GO" id="GO:0044220">
    <property type="term" value="C:host cell perinuclear region of cytoplasm"/>
    <property type="evidence" value="ECO:0007669"/>
    <property type="project" value="UniProtKB-SubCell"/>
</dbReference>
<dbReference type="GO" id="GO:0044423">
    <property type="term" value="C:virion component"/>
    <property type="evidence" value="ECO:0007669"/>
    <property type="project" value="UniProtKB-KW"/>
</dbReference>
<proteinExistence type="inferred from homology"/>
<name>PP220_ASFP4</name>
<organismHost>
    <name type="scientific">Ornithodoros</name>
    <name type="common">relapsing fever ticks</name>
    <dbReference type="NCBI Taxonomy" id="6937"/>
</organismHost>
<organismHost>
    <name type="scientific">Phacochoerus aethiopicus</name>
    <name type="common">Warthog</name>
    <dbReference type="NCBI Taxonomy" id="85517"/>
</organismHost>
<organismHost>
    <name type="scientific">Phacochoerus africanus</name>
    <name type="common">Warthog</name>
    <dbReference type="NCBI Taxonomy" id="41426"/>
</organismHost>
<organismHost>
    <name type="scientific">Potamochoerus larvatus</name>
    <name type="common">Bushpig</name>
    <dbReference type="NCBI Taxonomy" id="273792"/>
</organismHost>
<organismHost>
    <name type="scientific">Sus scrofa</name>
    <name type="common">Pig</name>
    <dbReference type="NCBI Taxonomy" id="9823"/>
</organismHost>
<sequence length="2475" mass="281269">MGNRGSSTSSRPPPSSEANIYAKLQDHIQRQTRPFSGGGYFNGGGDKNPVQHIKDYHIDSVSSKAKLRIIEGIIRAIAKIGFKVDTKQPIEDILKDIKKQLPDPRAGSTFVKNAEKQETVCKMIADAINQEFIDLGQDKLIDTTEGAASICRQIVLYINSLTHGLRAEYLDVHGSIENTLENIKLLNDAIKQLHERMVTEVTKAAPNEEVINAVTMIEAVYRRLLNEQNLQINILTNFIDNILTPTQKELDKLQTDEVDIIKLLNDTNSVLGTKNFGKVLSYTLCNLGIAASVANKINKALQKVGLKVEQYLQSKNWEEFDKELDLKRFSGLVSAENIAEFEKAVNLLRQTFNERHKILENSCAKKGGDEEKTPLDRRIEAQRLDRKHILMEFLNKSTQAYNDFLENVKKIGIKLVKEIALTPNITRLRDALSRINDMGTIALDLSLIGFYTNAAAREERETFLTQFMLVKNVLEEQSKTDPNFKNLYDSCSRLLQIIDFYTDIVQKKYGGEEDCECTRVGGAALTVEELGLSKAARSQVDLNQAINTFMYYYYVAQIYSNLTHNKQEFQSYEENYATILGDAIAGRLMQLDTEKNARINSPAVDLARGHVGPNPGGAQEVDWKAAVSAIELEYDVKRRFYRALEGLDLYLKNITKTFVNNIDSIQTVQQMLDGVRIIGRWFTEATGDTLAQVFESFPTSAGNDSNVFTDNAPAGHYYEKVAAEIQQGRSVGTLRPVRASQAKNIRDLIGRSLSNFQALKNIINAFARIGDMLGGEELRQMVPMSPLQIYKTLLEYIQHSALSVGLKNLNQSEIGGQRVALARTPEEAAQRVYLSTVRVNDALSTRWETEDVFFTFMLKSMAAKIFIVLGIYDMFERPEPVYKLIPTRMILGGADELEPEVIPEAAELYFRLPRLAEFYQKLFSFRDENVQISMLPELEGIFSGLIRIIFMRPIELINIGDYSETEIRQLIKEINVIYQHFNLEYGEQEATKKALIHFVNEINRRFGVITRTEWEKFQRIVQEARTMNDFGMMNQTNYSILPDEDGYTQSSQLLPSDRFISPSSQPTPKWRPALYNIDSVDVQTGMLQPNSQWDLVQKFRKQLSEMFEDPSLQQELGKVSYQELIRQAINELKKDHTDKIQIVSKLIQGSESLADTDVNKIFLFHETVITGLNLLSAIYVLLNNFRNNIKGLDLDTIQKSIIEWLRETPANVNHANLIDWLGRKHGAISEIRNPGLVIKEINMRLSEVYPDPTTEANVPQDRNLTTETLFAWIVPYVGIPAGGGVRAEQELAARYLVDNQRIMQLLLTNIFEMTSSFNKMVQVRFPETSTAQVHLDFTGLISLIDSLMADTKYFLNLLRPHIDKNIIQYYENRSNPGSFYWLEEHLIDKLIKPPTDAGGRPLPGGELGLEGVNQIINKTYTLLTKPYNVLQLRGGAQRRDAANIQINNNPQPSERFEQYGRVFSRLVFYDALENNSGLRVEQVVLGDFRLSNLIRTNNAQEENALSYWDNIALRTYANVNDAANNLRRYRLYGSDHGIQNNRSMMMVFNQLVASYIARFYDAPSGKIYLNLINAFANGNFSQAVMEMGYAHPDLARNNNAFGHRGDPTEQSVLLLSLGLILQRLIKDTNRQGLSQHLISTLTEIPIYLKENYRANLPLFNKMFNILISQGELLKQFIQYTNVQLARPNLTALLGANNDSVIYYNNNINVPMTGLSVGQAAMRGIGGVFRPNVTLMPLGDAQSNTSDIVRKRLVAVIDGIIRGSHTLADSAMEVLHELTDHPIYLETEEHFIQNYMSRYNKEPLMPFSLSLYYLRDLRIENNEVYDPLLYPNLESGSPEFKLLYGTRKLLGNDPVQLSDMPGVQLIMKNYNETVVAREQITPTRFEHFYTHAIQALRFIINIRSFKTVMMYNENTFGGVNLISENRDDKPIITAGIGMNAVYSLRKTLQDVISFVESSYQEEQINHIHKIVSPKGQTRTLGSNRERERIFNLFDMNIIPINVNALMRSIPLANIYNYDYSFEEIACLMYGISAEKVRSLNTAAPQPDIAEVLNIPNRPPMNTREFMLKLLINPYVSVSITQYGNELLSKGNAGYMSRIFRGDNALNMGRPKFLSDQIFNKVLFGSLYPTQFDYDEAGPSLAAGIQRGRERWGHPMSIYINQALHEIVRTIRLAETVRGLRNVIDRNQIIGELNAFRTQLEDTRREVNNLIQTPEIRNNPTPEIIAAVQNWGQQYRGQITDLIDLIGNVGQANSMINLIQNITPQTAGAQLIALFNIRGLPAPPPRQVIQNDIEAMQWFMTMVINHPPILIAPFMLLVNNLKEFLNTLERYVYKTPRWLGPGTARIAQPPVGMAPGINMRHHTSYTENSVLTYITEQNREEGPWSIVKQVGVGIQKPTLVQIGKDRFDTRLIRNLIFITNIQRLLRLRLNLELSQFRNVLVSPDHIINPSITEYGFSITGPSETFSDKQYDSDIRIL</sequence>
<comment type="function">
    <molecule>Polyprotein pp220</molecule>
    <text evidence="2">Essential for the core assembly. Its myristoyl moiety may function as a membrane-anchoring signal to bind the developing core shell to the inner viral envelope.</text>
</comment>
<comment type="function">
    <molecule>p34</molecule>
    <text evidence="2">The structural protein p34 is a component of the virus core shell.</text>
</comment>
<comment type="function">
    <molecule>p14</molecule>
    <text evidence="2">The structural protein p14 is a component of the virus core shell.</text>
</comment>
<comment type="function">
    <molecule>p37</molecule>
    <text evidence="2">The structural protein p37 is a component of the virus core shell.</text>
</comment>
<comment type="function">
    <molecule>p150</molecule>
    <text evidence="2">The structural protein p150 is a component of the virus core shell.</text>
</comment>
<comment type="subcellular location">
    <molecule>Polyprotein pp220</molecule>
    <subcellularLocation>
        <location evidence="2">Host cytoplasm</location>
        <location evidence="2">Host perinuclear region</location>
    </subcellularLocation>
    <text evidence="2">Found in perinuclear cytoplasmic viral factories during assembly.</text>
</comment>
<comment type="subcellular location">
    <molecule>p34</molecule>
    <subcellularLocation>
        <location evidence="2">Virion</location>
    </subcellularLocation>
    <subcellularLocation>
        <location evidence="2">Host cytoplasm</location>
        <location evidence="2">Host perinuclear region</location>
    </subcellularLocation>
    <text evidence="2">Found in perinuclear cytoplasmic viral factories during assembly (By similarity). In the virion, located in the core shell, which functions like a matrix between the DNA-containing nucleoid and the inner envelope (By similarity).</text>
</comment>
<comment type="subcellular location">
    <molecule>p14</molecule>
    <subcellularLocation>
        <location evidence="2">Virion</location>
    </subcellularLocation>
    <subcellularLocation>
        <location evidence="2">Host cytoplasm</location>
        <location evidence="2">Host perinuclear region</location>
    </subcellularLocation>
    <text evidence="2">Found in perinuclear cytoplasmic viral factories during assembly. In the virion, located in the core shell, which functions like a matrix between the DNA-containing nucleoid and the inner envelope.</text>
</comment>
<comment type="subcellular location">
    <molecule>p37</molecule>
    <subcellularLocation>
        <location evidence="2">Virion</location>
    </subcellularLocation>
    <subcellularLocation>
        <location evidence="2">Host cytoplasm</location>
        <location evidence="2">Host perinuclear region</location>
    </subcellularLocation>
    <subcellularLocation>
        <location evidence="2">Host nucleus</location>
    </subcellularLocation>
    <text evidence="2">Nuclear at early stages of infection. Found in perinuclear cytoplasmic viral factories during assembly. In the virion, located in the core shell, which functions like a matrix between the DNA-containing nucleoid and the inner envelope.</text>
</comment>
<comment type="subcellular location">
    <molecule>p150</molecule>
    <subcellularLocation>
        <location evidence="2">Virion</location>
    </subcellularLocation>
    <subcellularLocation>
        <location evidence="2">Host cytoplasm</location>
        <location evidence="2">Host perinuclear region</location>
    </subcellularLocation>
    <text evidence="2">Found in perinuclear cytoplasmic viral factories during assembly. In the virion, located in the core shell, which functions like a matrix between the DNA-containing nucleoid and the inner envelope.</text>
</comment>
<comment type="subcellular location">
    <molecule>p5</molecule>
    <subcellularLocation>
        <location evidence="2">Virion</location>
    </subcellularLocation>
</comment>
<comment type="induction">
    <molecule>Polyprotein pp220</molecule>
    <text evidence="4">Expressed in the late phase of the viral replicative cycle.</text>
</comment>
<comment type="PTM">
    <molecule>Polyprotein pp220</molecule>
    <text evidence="2">Specific enzymatic cleavages in vivo by the viral pS273R protease yield mature proteins.</text>
</comment>
<comment type="similarity">
    <text evidence="4">Belongs to the asfivirus polyprotein pp220 family.</text>
</comment>
<evidence type="ECO:0000250" key="1"/>
<evidence type="ECO:0000250" key="2">
    <source>
        <dbReference type="UniProtKB" id="Q08358"/>
    </source>
</evidence>
<evidence type="ECO:0000255" key="3"/>
<evidence type="ECO:0000305" key="4"/>
<keyword id="KW-0175">Coiled coil</keyword>
<keyword id="KW-1035">Host cytoplasm</keyword>
<keyword id="KW-1048">Host nucleus</keyword>
<keyword id="KW-0426">Late protein</keyword>
<keyword id="KW-0449">Lipoprotein</keyword>
<keyword id="KW-0519">Myristate</keyword>
<keyword id="KW-0946">Virion</keyword>
<reference key="1">
    <citation type="submission" date="2003-03" db="EMBL/GenBank/DDBJ databases">
        <title>African swine fever virus genomes.</title>
        <authorList>
            <person name="Kutish G.F."/>
            <person name="Rock D.L."/>
        </authorList>
    </citation>
    <scope>NUCLEOTIDE SEQUENCE [GENOMIC DNA]</scope>
</reference>
<feature type="initiator methionine" description="Removed; by host" evidence="1">
    <location>
        <position position="1"/>
    </location>
</feature>
<feature type="chain" id="PRO_0000454834" description="p5">
    <location>
        <begin position="2"/>
        <end position="44"/>
    </location>
</feature>
<feature type="chain" id="PRO_0000373434" description="Polyprotein pp220" evidence="3">
    <location>
        <begin position="45"/>
        <end position="2475"/>
    </location>
</feature>
<feature type="chain" id="PRO_0000373435" description="p34" evidence="3">
    <location>
        <begin position="45"/>
        <end position="368"/>
    </location>
</feature>
<feature type="chain" id="PRO_0000373436" description="p14" evidence="3">
    <location>
        <begin position="369"/>
        <end position="522"/>
    </location>
</feature>
<feature type="chain" id="PRO_0000373437" description="p37" evidence="3">
    <location>
        <begin position="523"/>
        <end position="893"/>
    </location>
</feature>
<feature type="chain" id="PRO_0000373438" description="p150" evidence="3">
    <location>
        <begin position="894"/>
        <end position="2475"/>
    </location>
</feature>
<feature type="coiled-coil region" evidence="3">
    <location>
        <begin position="2184"/>
        <end position="2211"/>
    </location>
</feature>
<feature type="site" description="Cleavage; by viral protease S273R" evidence="2">
    <location>
        <begin position="44"/>
        <end position="45"/>
    </location>
</feature>
<feature type="site" description="Cleavage; by viral protease S273R" evidence="2">
    <location>
        <begin position="368"/>
        <end position="369"/>
    </location>
</feature>
<feature type="site" description="Cleavage; by viral protease S273R" evidence="2">
    <location>
        <begin position="522"/>
        <end position="523"/>
    </location>
</feature>
<feature type="site" description="Cleavage; by viral protease S273R" evidence="2">
    <location>
        <begin position="893"/>
        <end position="894"/>
    </location>
</feature>
<feature type="lipid moiety-binding region" description="N-myristoyl glycine; by host" evidence="2">
    <location>
        <position position="2"/>
    </location>
</feature>
<accession>P0CA03</accession>